<organism>
    <name type="scientific">Norovirus (isolate Mouse/NoV/United States/MNV1/2002/GV)</name>
    <name type="common">MNV-1</name>
    <name type="synonym">Murine Norovirus 1</name>
    <dbReference type="NCBI Taxonomy" id="223997"/>
    <lineage>
        <taxon>Viruses</taxon>
        <taxon>Riboviria</taxon>
        <taxon>Orthornavirae</taxon>
        <taxon>Pisuviricota</taxon>
        <taxon>Pisoniviricetes</taxon>
        <taxon>Picornavirales</taxon>
        <taxon>Caliciviridae</taxon>
        <taxon>Norovirus</taxon>
        <taxon>Norwalk virus</taxon>
    </lineage>
</organism>
<name>VF1_MNV1</name>
<protein>
    <recommendedName>
        <fullName>Virulence factor 1</fullName>
    </recommendedName>
    <alternativeName>
        <fullName>VF1</fullName>
    </alternativeName>
</protein>
<dbReference type="EMBL" id="AY228235">
    <property type="status" value="NOT_ANNOTATED_CDS"/>
    <property type="molecule type" value="Genomic_RNA"/>
</dbReference>
<dbReference type="Proteomes" id="UP000109015">
    <property type="component" value="Genome"/>
</dbReference>
<dbReference type="GO" id="GO:0033650">
    <property type="term" value="C:host cell mitochondrion"/>
    <property type="evidence" value="ECO:0007669"/>
    <property type="project" value="UniProtKB-SubCell"/>
</dbReference>
<dbReference type="GO" id="GO:0052170">
    <property type="term" value="P:symbiont-mediated suppression of host innate immune response"/>
    <property type="evidence" value="ECO:0007669"/>
    <property type="project" value="UniProtKB-KW"/>
</dbReference>
<comment type="function">
    <text evidence="1">Plays a role in antagonizing the host innate immune response.</text>
</comment>
<comment type="subcellular location">
    <subcellularLocation>
        <location evidence="1">Host mitochondrion</location>
    </subcellularLocation>
</comment>
<comment type="induction">
    <text evidence="1">expressed as early as 9 hpi.</text>
</comment>
<comment type="miscellaneous">
    <text evidence="2">This ORF is not present in other Noroviruses.</text>
</comment>
<accession>P0DTN9</accession>
<keyword id="KW-1045">Host mitochondrion</keyword>
<keyword id="KW-0945">Host-virus interaction</keyword>
<keyword id="KW-1090">Inhibition of host innate immune response by virus</keyword>
<keyword id="KW-0899">Viral immunoevasion</keyword>
<proteinExistence type="evidence at transcript level"/>
<sequence length="213" mass="23767">MAQRQKPMALRPAARILFLPPLNRPSPFNPWLARLLPPPPPGKLTKLTPGSSKILSSAPLVSFPSRLETPQVKYCLIWPSGQGLTPTLPTSQPCTPAGLGTWRFSWSSPAMPLLLARWLLPLYHPIFPRGHSLLPRSHASHMSCVMCAPWSPFNSLFLMCVESFGMLPRIKRNLCAWFACCTRHSAQTARVMSLLWSLAAFFLSRRLISILST</sequence>
<evidence type="ECO:0000269" key="1">
    <source>
    </source>
</evidence>
<evidence type="ECO:0000305" key="2"/>
<feature type="chain" id="PRO_0000460244" description="Virulence factor 1">
    <location>
        <begin position="1"/>
        <end position="213"/>
    </location>
</feature>
<reference key="1">
    <citation type="journal article" date="2003" name="Science">
        <title>STAT1-dependent innate immunity to a Norwalk-like virus.</title>
        <authorList>
            <person name="Karst S.M."/>
            <person name="Wobus C.E."/>
            <person name="Lay M."/>
            <person name="Davidson J."/>
            <person name="Virgin H.W."/>
        </authorList>
    </citation>
    <scope>NUCLEOTIDE SEQUENCE [GENOMIC DNA]</scope>
</reference>
<reference key="2">
    <citation type="journal article" date="2011" name="PLoS Pathog.">
        <title>Norovirus regulation of the innate immune response and apoptosis occurs via the product of the alternative open reading frame 4.</title>
        <authorList>
            <person name="McFadden N."/>
            <person name="Bailey D."/>
            <person name="Carrara G."/>
            <person name="Benson A."/>
            <person name="Chaudhry Y."/>
            <person name="Shortland A."/>
            <person name="Heeney J."/>
            <person name="Yarovinsky F."/>
            <person name="Simmonds P."/>
            <person name="Macdonald A."/>
            <person name="Goodfellow I."/>
        </authorList>
    </citation>
    <scope>FUNCTION</scope>
    <scope>SUBCELLULAR LOCATION</scope>
    <scope>INDUCTION</scope>
</reference>